<sequence>MSSSDIFDVLNIKQKSSSPNAASPSVPASGKSSKPQLTGMQRELYNLLGENEAPVVVQSMNRFKEKLASNAKPTPWSLANFKANEYLTLQHWVKGSRELIGEEPQESEFKKYDVHLTIPEFTEDEYNSFIPTSNAEENEKQNIGEKVEANGDSTDVNMTEEDTNDKVKESVPQDENKSTSDNKKNNEKWEYNEVKYLFDLCKKYDLRWFVIQDRYDYENSNRTLEDLKSKFYEVSKCYFKAKKPDDPMLQSLNYSKDKETQRKKYLERLLARSAAEIAEEEALIIESRKFEMAAKKTLAERETLLRLLDSPQSDISVAQYLTSNGMSQLYNSLLADKSRKRKIDSAVPENPWMKQQHQFAQQRQQMQQLQQKKLEKHDASATPGPATTVTATETSTNVTSAGSIPSGLQSPKKTKRQKLELQTALKRKSESEYAEQLLKIFNMDERKSLGVIAHGEKLSPGVFLRSAKITTFKPAIQNKIISTAQELGIPARPVMPTFEVVTEYEALLKKIATLLDIKKQIDKIEAGKQITK</sequence>
<name>SWC4_CANGA</name>
<comment type="function">
    <text evidence="1">Component of the SWR1 complex which mediates the ATP-dependent exchange of histone H2A for the H2A variant HZT1 leading to transcriptional regulation of selected genes by chromatin remodeling. Component of the NuA4 histone acetyltransferase complex which is involved in transcriptional activation of selected genes principally by acetylation of nucleosomal histone H4 and H2A. The NuA4 complex is also involved in DNA repair (By similarity).</text>
</comment>
<comment type="subunit">
    <text evidence="1">Component of the SWR1 chromatin-remodeling complex and of the NuA4 histone acetyltransferase complex.</text>
</comment>
<comment type="subcellular location">
    <subcellularLocation>
        <location evidence="1">Nucleus</location>
    </subcellularLocation>
</comment>
<comment type="similarity">
    <text evidence="3">Belongs to the SWC4 family.</text>
</comment>
<accession>Q6FTV1</accession>
<proteinExistence type="inferred from homology"/>
<reference key="1">
    <citation type="journal article" date="2004" name="Nature">
        <title>Genome evolution in yeasts.</title>
        <authorList>
            <person name="Dujon B."/>
            <person name="Sherman D."/>
            <person name="Fischer G."/>
            <person name="Durrens P."/>
            <person name="Casaregola S."/>
            <person name="Lafontaine I."/>
            <person name="de Montigny J."/>
            <person name="Marck C."/>
            <person name="Neuveglise C."/>
            <person name="Talla E."/>
            <person name="Goffard N."/>
            <person name="Frangeul L."/>
            <person name="Aigle M."/>
            <person name="Anthouard V."/>
            <person name="Babour A."/>
            <person name="Barbe V."/>
            <person name="Barnay S."/>
            <person name="Blanchin S."/>
            <person name="Beckerich J.-M."/>
            <person name="Beyne E."/>
            <person name="Bleykasten C."/>
            <person name="Boisrame A."/>
            <person name="Boyer J."/>
            <person name="Cattolico L."/>
            <person name="Confanioleri F."/>
            <person name="de Daruvar A."/>
            <person name="Despons L."/>
            <person name="Fabre E."/>
            <person name="Fairhead C."/>
            <person name="Ferry-Dumazet H."/>
            <person name="Groppi A."/>
            <person name="Hantraye F."/>
            <person name="Hennequin C."/>
            <person name="Jauniaux N."/>
            <person name="Joyet P."/>
            <person name="Kachouri R."/>
            <person name="Kerrest A."/>
            <person name="Koszul R."/>
            <person name="Lemaire M."/>
            <person name="Lesur I."/>
            <person name="Ma L."/>
            <person name="Muller H."/>
            <person name="Nicaud J.-M."/>
            <person name="Nikolski M."/>
            <person name="Oztas S."/>
            <person name="Ozier-Kalogeropoulos O."/>
            <person name="Pellenz S."/>
            <person name="Potier S."/>
            <person name="Richard G.-F."/>
            <person name="Straub M.-L."/>
            <person name="Suleau A."/>
            <person name="Swennen D."/>
            <person name="Tekaia F."/>
            <person name="Wesolowski-Louvel M."/>
            <person name="Westhof E."/>
            <person name="Wirth B."/>
            <person name="Zeniou-Meyer M."/>
            <person name="Zivanovic Y."/>
            <person name="Bolotin-Fukuhara M."/>
            <person name="Thierry A."/>
            <person name="Bouchier C."/>
            <person name="Caudron B."/>
            <person name="Scarpelli C."/>
            <person name="Gaillardin C."/>
            <person name="Weissenbach J."/>
            <person name="Wincker P."/>
            <person name="Souciet J.-L."/>
        </authorList>
    </citation>
    <scope>NUCLEOTIDE SEQUENCE [LARGE SCALE GENOMIC DNA]</scope>
    <source>
        <strain>ATCC 2001 / BCRC 20586 / JCM 3761 / NBRC 0622 / NRRL Y-65 / CBS 138</strain>
    </source>
</reference>
<dbReference type="EMBL" id="CR380952">
    <property type="protein sequence ID" value="CAG59267.1"/>
    <property type="molecule type" value="Genomic_DNA"/>
</dbReference>
<dbReference type="RefSeq" id="XP_446343.1">
    <property type="nucleotide sequence ID" value="XM_446343.1"/>
</dbReference>
<dbReference type="SMR" id="Q6FTV1"/>
<dbReference type="FunCoup" id="Q6FTV1">
    <property type="interactions" value="1067"/>
</dbReference>
<dbReference type="STRING" id="284593.Q6FTV1"/>
<dbReference type="EnsemblFungi" id="CAGL0F08613g-T">
    <property type="protein sequence ID" value="CAGL0F08613g-T-p1"/>
    <property type="gene ID" value="CAGL0F08613g"/>
</dbReference>
<dbReference type="KEGG" id="cgr:2887793"/>
<dbReference type="CGD" id="CAL0131238">
    <property type="gene designation" value="CAGL0F08613g"/>
</dbReference>
<dbReference type="VEuPathDB" id="FungiDB:CAGL0F08613g"/>
<dbReference type="eggNOG" id="KOG2656">
    <property type="taxonomic scope" value="Eukaryota"/>
</dbReference>
<dbReference type="HOGENOM" id="CLU_018539_4_0_1"/>
<dbReference type="InParanoid" id="Q6FTV1"/>
<dbReference type="OMA" id="GNTTMYQ"/>
<dbReference type="Proteomes" id="UP000002428">
    <property type="component" value="Chromosome F"/>
</dbReference>
<dbReference type="GO" id="GO:0035267">
    <property type="term" value="C:NuA4 histone acetyltransferase complex"/>
    <property type="evidence" value="ECO:0007669"/>
    <property type="project" value="EnsemblFungi"/>
</dbReference>
<dbReference type="GO" id="GO:0000812">
    <property type="term" value="C:Swr1 complex"/>
    <property type="evidence" value="ECO:0007669"/>
    <property type="project" value="EnsemblFungi"/>
</dbReference>
<dbReference type="GO" id="GO:0003714">
    <property type="term" value="F:transcription corepressor activity"/>
    <property type="evidence" value="ECO:0007669"/>
    <property type="project" value="TreeGrafter"/>
</dbReference>
<dbReference type="GO" id="GO:0006338">
    <property type="term" value="P:chromatin remodeling"/>
    <property type="evidence" value="ECO:0007669"/>
    <property type="project" value="EnsemblFungi"/>
</dbReference>
<dbReference type="GO" id="GO:0051276">
    <property type="term" value="P:chromosome organization"/>
    <property type="evidence" value="ECO:0007669"/>
    <property type="project" value="EnsemblFungi"/>
</dbReference>
<dbReference type="GO" id="GO:0006281">
    <property type="term" value="P:DNA repair"/>
    <property type="evidence" value="ECO:0007669"/>
    <property type="project" value="UniProtKB-KW"/>
</dbReference>
<dbReference type="GO" id="GO:0000122">
    <property type="term" value="P:negative regulation of transcription by RNA polymerase II"/>
    <property type="evidence" value="ECO:0007669"/>
    <property type="project" value="TreeGrafter"/>
</dbReference>
<dbReference type="Gene3D" id="1.10.10.60">
    <property type="entry name" value="Homeodomain-like"/>
    <property type="match status" value="1"/>
</dbReference>
<dbReference type="InterPro" id="IPR032563">
    <property type="entry name" value="DAMP1_SANT-like"/>
</dbReference>
<dbReference type="InterPro" id="IPR009057">
    <property type="entry name" value="Homeodomain-like_sf"/>
</dbReference>
<dbReference type="InterPro" id="IPR027109">
    <property type="entry name" value="Swc4/Dmap1"/>
</dbReference>
<dbReference type="PANTHER" id="PTHR12855:SF10">
    <property type="entry name" value="DNA METHYLTRANSFERASE 1-ASSOCIATED PROTEIN 1"/>
    <property type="match status" value="1"/>
</dbReference>
<dbReference type="PANTHER" id="PTHR12855">
    <property type="entry name" value="DNA METHYLTRANSFERASE 1-ASSOCIATED PROTEIN 1 FAMILY MEMBER"/>
    <property type="match status" value="1"/>
</dbReference>
<dbReference type="Pfam" id="PF16282">
    <property type="entry name" value="SANT_DAMP1_like"/>
    <property type="match status" value="1"/>
</dbReference>
<dbReference type="SUPFAM" id="SSF46689">
    <property type="entry name" value="Homeodomain-like"/>
    <property type="match status" value="1"/>
</dbReference>
<evidence type="ECO:0000250" key="1"/>
<evidence type="ECO:0000256" key="2">
    <source>
        <dbReference type="SAM" id="MobiDB-lite"/>
    </source>
</evidence>
<evidence type="ECO:0000305" key="3"/>
<gene>
    <name type="primary">SWC4</name>
    <name type="ordered locus">CAGL0F08613g</name>
</gene>
<organism>
    <name type="scientific">Candida glabrata (strain ATCC 2001 / BCRC 20586 / JCM 3761 / NBRC 0622 / NRRL Y-65 / CBS 138)</name>
    <name type="common">Yeast</name>
    <name type="synonym">Nakaseomyces glabratus</name>
    <dbReference type="NCBI Taxonomy" id="284593"/>
    <lineage>
        <taxon>Eukaryota</taxon>
        <taxon>Fungi</taxon>
        <taxon>Dikarya</taxon>
        <taxon>Ascomycota</taxon>
        <taxon>Saccharomycotina</taxon>
        <taxon>Saccharomycetes</taxon>
        <taxon>Saccharomycetales</taxon>
        <taxon>Saccharomycetaceae</taxon>
        <taxon>Nakaseomyces</taxon>
    </lineage>
</organism>
<keyword id="KW-0010">Activator</keyword>
<keyword id="KW-0156">Chromatin regulator</keyword>
<keyword id="KW-0227">DNA damage</keyword>
<keyword id="KW-0234">DNA repair</keyword>
<keyword id="KW-0539">Nucleus</keyword>
<keyword id="KW-1185">Reference proteome</keyword>
<keyword id="KW-0804">Transcription</keyword>
<keyword id="KW-0805">Transcription regulation</keyword>
<protein>
    <recommendedName>
        <fullName>SWR1-complex protein 4</fullName>
    </recommendedName>
</protein>
<feature type="chain" id="PRO_0000076338" description="SWR1-complex protein 4">
    <location>
        <begin position="1"/>
        <end position="532"/>
    </location>
</feature>
<feature type="domain" description="SANT">
    <location>
        <begin position="181"/>
        <end position="235"/>
    </location>
</feature>
<feature type="region of interest" description="Disordered" evidence="2">
    <location>
        <begin position="13"/>
        <end position="39"/>
    </location>
</feature>
<feature type="region of interest" description="Disordered" evidence="2">
    <location>
        <begin position="132"/>
        <end position="184"/>
    </location>
</feature>
<feature type="region of interest" description="Disordered" evidence="2">
    <location>
        <begin position="363"/>
        <end position="417"/>
    </location>
</feature>
<feature type="compositionally biased region" description="Low complexity" evidence="2">
    <location>
        <begin position="16"/>
        <end position="29"/>
    </location>
</feature>
<feature type="compositionally biased region" description="Polar residues" evidence="2">
    <location>
        <begin position="30"/>
        <end position="39"/>
    </location>
</feature>
<feature type="compositionally biased region" description="Basic and acidic residues" evidence="2">
    <location>
        <begin position="137"/>
        <end position="149"/>
    </location>
</feature>
<feature type="compositionally biased region" description="Basic and acidic residues" evidence="2">
    <location>
        <begin position="164"/>
        <end position="184"/>
    </location>
</feature>
<feature type="compositionally biased region" description="Low complexity" evidence="2">
    <location>
        <begin position="380"/>
        <end position="401"/>
    </location>
</feature>
<feature type="compositionally biased region" description="Polar residues" evidence="2">
    <location>
        <begin position="402"/>
        <end position="411"/>
    </location>
</feature>